<evidence type="ECO:0000255" key="1">
    <source>
        <dbReference type="HAMAP-Rule" id="MF_01210"/>
    </source>
</evidence>
<dbReference type="EC" id="6.3.4.16" evidence="1"/>
<dbReference type="EC" id="6.3.5.5" evidence="1"/>
<dbReference type="EMBL" id="CP001401">
    <property type="protein sequence ID" value="ACP55489.1"/>
    <property type="molecule type" value="Genomic_DNA"/>
</dbReference>
<dbReference type="RefSeq" id="WP_012711488.1">
    <property type="nucleotide sequence ID" value="NC_012632.1"/>
</dbReference>
<dbReference type="SMR" id="C3N664"/>
<dbReference type="GeneID" id="84058900"/>
<dbReference type="KEGG" id="sim:M1627_1608"/>
<dbReference type="HOGENOM" id="CLU_000513_1_3_2"/>
<dbReference type="UniPathway" id="UPA00068">
    <property type="reaction ID" value="UER00171"/>
</dbReference>
<dbReference type="UniPathway" id="UPA00070">
    <property type="reaction ID" value="UER00115"/>
</dbReference>
<dbReference type="Proteomes" id="UP000002307">
    <property type="component" value="Chromosome"/>
</dbReference>
<dbReference type="GO" id="GO:0005737">
    <property type="term" value="C:cytoplasm"/>
    <property type="evidence" value="ECO:0007669"/>
    <property type="project" value="TreeGrafter"/>
</dbReference>
<dbReference type="GO" id="GO:0005524">
    <property type="term" value="F:ATP binding"/>
    <property type="evidence" value="ECO:0007669"/>
    <property type="project" value="UniProtKB-UniRule"/>
</dbReference>
<dbReference type="GO" id="GO:0004087">
    <property type="term" value="F:carbamoyl-phosphate synthase (ammonia) activity"/>
    <property type="evidence" value="ECO:0007669"/>
    <property type="project" value="RHEA"/>
</dbReference>
<dbReference type="GO" id="GO:0004088">
    <property type="term" value="F:carbamoyl-phosphate synthase (glutamine-hydrolyzing) activity"/>
    <property type="evidence" value="ECO:0007669"/>
    <property type="project" value="UniProtKB-UniRule"/>
</dbReference>
<dbReference type="GO" id="GO:0046872">
    <property type="term" value="F:metal ion binding"/>
    <property type="evidence" value="ECO:0007669"/>
    <property type="project" value="UniProtKB-KW"/>
</dbReference>
<dbReference type="GO" id="GO:0044205">
    <property type="term" value="P:'de novo' UMP biosynthetic process"/>
    <property type="evidence" value="ECO:0007669"/>
    <property type="project" value="UniProtKB-UniRule"/>
</dbReference>
<dbReference type="GO" id="GO:0006541">
    <property type="term" value="P:glutamine metabolic process"/>
    <property type="evidence" value="ECO:0007669"/>
    <property type="project" value="TreeGrafter"/>
</dbReference>
<dbReference type="GO" id="GO:0006526">
    <property type="term" value="P:L-arginine biosynthetic process"/>
    <property type="evidence" value="ECO:0007669"/>
    <property type="project" value="UniProtKB-UniRule"/>
</dbReference>
<dbReference type="FunFam" id="1.10.1030.10:FF:000002">
    <property type="entry name" value="Carbamoyl-phosphate synthase large chain"/>
    <property type="match status" value="1"/>
</dbReference>
<dbReference type="FunFam" id="3.30.1490.20:FF:000001">
    <property type="entry name" value="Carbamoyl-phosphate synthase large chain"/>
    <property type="match status" value="1"/>
</dbReference>
<dbReference type="FunFam" id="3.30.470.20:FF:000001">
    <property type="entry name" value="Carbamoyl-phosphate synthase large chain"/>
    <property type="match status" value="1"/>
</dbReference>
<dbReference type="FunFam" id="3.30.470.20:FF:000026">
    <property type="entry name" value="Carbamoyl-phosphate synthase large chain"/>
    <property type="match status" value="1"/>
</dbReference>
<dbReference type="FunFam" id="3.40.50.20:FF:000001">
    <property type="entry name" value="Carbamoyl-phosphate synthase large chain"/>
    <property type="match status" value="2"/>
</dbReference>
<dbReference type="Gene3D" id="3.40.50.20">
    <property type="match status" value="2"/>
</dbReference>
<dbReference type="Gene3D" id="3.30.1490.20">
    <property type="entry name" value="ATP-grasp fold, A domain"/>
    <property type="match status" value="1"/>
</dbReference>
<dbReference type="Gene3D" id="3.30.470.20">
    <property type="entry name" value="ATP-grasp fold, B domain"/>
    <property type="match status" value="2"/>
</dbReference>
<dbReference type="Gene3D" id="1.10.1030.10">
    <property type="entry name" value="Carbamoyl-phosphate synthetase, large subunit oligomerisation domain"/>
    <property type="match status" value="1"/>
</dbReference>
<dbReference type="HAMAP" id="MF_01210_A">
    <property type="entry name" value="CPSase_L_chain_A"/>
    <property type="match status" value="1"/>
</dbReference>
<dbReference type="InterPro" id="IPR011761">
    <property type="entry name" value="ATP-grasp"/>
</dbReference>
<dbReference type="InterPro" id="IPR013815">
    <property type="entry name" value="ATP_grasp_subdomain_1"/>
</dbReference>
<dbReference type="InterPro" id="IPR006275">
    <property type="entry name" value="CarbamoylP_synth_lsu"/>
</dbReference>
<dbReference type="InterPro" id="IPR005480">
    <property type="entry name" value="CarbamoylP_synth_lsu_oligo"/>
</dbReference>
<dbReference type="InterPro" id="IPR036897">
    <property type="entry name" value="CarbamoylP_synth_lsu_oligo_sf"/>
</dbReference>
<dbReference type="InterPro" id="IPR005479">
    <property type="entry name" value="CbamoylP_synth_lsu-like_ATP-bd"/>
</dbReference>
<dbReference type="InterPro" id="IPR005483">
    <property type="entry name" value="CbamoylP_synth_lsu_CPSase_dom"/>
</dbReference>
<dbReference type="InterPro" id="IPR011607">
    <property type="entry name" value="MGS-like_dom"/>
</dbReference>
<dbReference type="InterPro" id="IPR016185">
    <property type="entry name" value="PreATP-grasp_dom_sf"/>
</dbReference>
<dbReference type="NCBIfam" id="TIGR01369">
    <property type="entry name" value="CPSaseII_lrg"/>
    <property type="match status" value="1"/>
</dbReference>
<dbReference type="NCBIfam" id="NF003671">
    <property type="entry name" value="PRK05294.1"/>
    <property type="match status" value="1"/>
</dbReference>
<dbReference type="NCBIfam" id="NF009455">
    <property type="entry name" value="PRK12815.1"/>
    <property type="match status" value="1"/>
</dbReference>
<dbReference type="PANTHER" id="PTHR11405:SF53">
    <property type="entry name" value="CARBAMOYL-PHOSPHATE SYNTHASE [AMMONIA], MITOCHONDRIAL"/>
    <property type="match status" value="1"/>
</dbReference>
<dbReference type="PANTHER" id="PTHR11405">
    <property type="entry name" value="CARBAMOYLTRANSFERASE FAMILY MEMBER"/>
    <property type="match status" value="1"/>
</dbReference>
<dbReference type="Pfam" id="PF02786">
    <property type="entry name" value="CPSase_L_D2"/>
    <property type="match status" value="2"/>
</dbReference>
<dbReference type="Pfam" id="PF02787">
    <property type="entry name" value="CPSase_L_D3"/>
    <property type="match status" value="1"/>
</dbReference>
<dbReference type="PRINTS" id="PR00098">
    <property type="entry name" value="CPSASE"/>
</dbReference>
<dbReference type="SMART" id="SM01096">
    <property type="entry name" value="CPSase_L_D3"/>
    <property type="match status" value="1"/>
</dbReference>
<dbReference type="SUPFAM" id="SSF48108">
    <property type="entry name" value="Carbamoyl phosphate synthetase, large subunit connection domain"/>
    <property type="match status" value="1"/>
</dbReference>
<dbReference type="SUPFAM" id="SSF56059">
    <property type="entry name" value="Glutathione synthetase ATP-binding domain-like"/>
    <property type="match status" value="2"/>
</dbReference>
<dbReference type="SUPFAM" id="SSF52440">
    <property type="entry name" value="PreATP-grasp domain"/>
    <property type="match status" value="2"/>
</dbReference>
<dbReference type="PROSITE" id="PS50975">
    <property type="entry name" value="ATP_GRASP"/>
    <property type="match status" value="2"/>
</dbReference>
<dbReference type="PROSITE" id="PS00867">
    <property type="entry name" value="CPSASE_2"/>
    <property type="match status" value="1"/>
</dbReference>
<dbReference type="PROSITE" id="PS51855">
    <property type="entry name" value="MGS"/>
    <property type="match status" value="1"/>
</dbReference>
<name>CARB_SACI3</name>
<proteinExistence type="inferred from homology"/>
<organism>
    <name type="scientific">Saccharolobus islandicus (strain M.16.27)</name>
    <name type="common">Sulfolobus islandicus</name>
    <dbReference type="NCBI Taxonomy" id="427318"/>
    <lineage>
        <taxon>Archaea</taxon>
        <taxon>Thermoproteota</taxon>
        <taxon>Thermoprotei</taxon>
        <taxon>Sulfolobales</taxon>
        <taxon>Sulfolobaceae</taxon>
        <taxon>Saccharolobus</taxon>
    </lineage>
</organism>
<feature type="chain" id="PRO_1000213880" description="Carbamoyl phosphate synthase large chain">
    <location>
        <begin position="1"/>
        <end position="1051"/>
    </location>
</feature>
<feature type="domain" description="ATP-grasp 1" evidence="1">
    <location>
        <begin position="131"/>
        <end position="325"/>
    </location>
</feature>
<feature type="domain" description="ATP-grasp 2" evidence="1">
    <location>
        <begin position="673"/>
        <end position="863"/>
    </location>
</feature>
<feature type="domain" description="MGS-like" evidence="1">
    <location>
        <begin position="930"/>
        <end position="1051"/>
    </location>
</feature>
<feature type="region of interest" description="Carboxyphosphate synthetic domain" evidence="1">
    <location>
        <begin position="1"/>
        <end position="399"/>
    </location>
</feature>
<feature type="region of interest" description="Oligomerization domain" evidence="1">
    <location>
        <begin position="400"/>
        <end position="548"/>
    </location>
</feature>
<feature type="region of interest" description="Carbamoyl phosphate synthetic domain" evidence="1">
    <location>
        <begin position="549"/>
        <end position="930"/>
    </location>
</feature>
<feature type="region of interest" description="Allosteric domain" evidence="1">
    <location>
        <begin position="931"/>
        <end position="1051"/>
    </location>
</feature>
<feature type="binding site" evidence="1">
    <location>
        <position position="127"/>
    </location>
    <ligand>
        <name>ATP</name>
        <dbReference type="ChEBI" id="CHEBI:30616"/>
        <label>1</label>
    </ligand>
</feature>
<feature type="binding site" evidence="1">
    <location>
        <position position="167"/>
    </location>
    <ligand>
        <name>ATP</name>
        <dbReference type="ChEBI" id="CHEBI:30616"/>
        <label>1</label>
    </ligand>
</feature>
<feature type="binding site" evidence="1">
    <location>
        <position position="173"/>
    </location>
    <ligand>
        <name>ATP</name>
        <dbReference type="ChEBI" id="CHEBI:30616"/>
        <label>1</label>
    </ligand>
</feature>
<feature type="binding site" evidence="1">
    <location>
        <position position="174"/>
    </location>
    <ligand>
        <name>ATP</name>
        <dbReference type="ChEBI" id="CHEBI:30616"/>
        <label>1</label>
    </ligand>
</feature>
<feature type="binding site" evidence="1">
    <location>
        <position position="206"/>
    </location>
    <ligand>
        <name>ATP</name>
        <dbReference type="ChEBI" id="CHEBI:30616"/>
        <label>1</label>
    </ligand>
</feature>
<feature type="binding site" evidence="1">
    <location>
        <position position="208"/>
    </location>
    <ligand>
        <name>ATP</name>
        <dbReference type="ChEBI" id="CHEBI:30616"/>
        <label>1</label>
    </ligand>
</feature>
<feature type="binding site" evidence="1">
    <location>
        <position position="213"/>
    </location>
    <ligand>
        <name>ATP</name>
        <dbReference type="ChEBI" id="CHEBI:30616"/>
        <label>1</label>
    </ligand>
</feature>
<feature type="binding site" evidence="1">
    <location>
        <position position="239"/>
    </location>
    <ligand>
        <name>ATP</name>
        <dbReference type="ChEBI" id="CHEBI:30616"/>
        <label>1</label>
    </ligand>
</feature>
<feature type="binding site" evidence="1">
    <location>
        <position position="240"/>
    </location>
    <ligand>
        <name>ATP</name>
        <dbReference type="ChEBI" id="CHEBI:30616"/>
        <label>1</label>
    </ligand>
</feature>
<feature type="binding site" evidence="1">
    <location>
        <position position="241"/>
    </location>
    <ligand>
        <name>ATP</name>
        <dbReference type="ChEBI" id="CHEBI:30616"/>
        <label>1</label>
    </ligand>
</feature>
<feature type="binding site" evidence="1">
    <location>
        <position position="282"/>
    </location>
    <ligand>
        <name>ATP</name>
        <dbReference type="ChEBI" id="CHEBI:30616"/>
        <label>1</label>
    </ligand>
</feature>
<feature type="binding site" evidence="1">
    <location>
        <position position="282"/>
    </location>
    <ligand>
        <name>Mg(2+)</name>
        <dbReference type="ChEBI" id="CHEBI:18420"/>
        <label>1</label>
    </ligand>
</feature>
<feature type="binding site" evidence="1">
    <location>
        <position position="282"/>
    </location>
    <ligand>
        <name>Mn(2+)</name>
        <dbReference type="ChEBI" id="CHEBI:29035"/>
        <label>1</label>
    </ligand>
</feature>
<feature type="binding site" evidence="1">
    <location>
        <position position="296"/>
    </location>
    <ligand>
        <name>ATP</name>
        <dbReference type="ChEBI" id="CHEBI:30616"/>
        <label>1</label>
    </ligand>
</feature>
<feature type="binding site" evidence="1">
    <location>
        <position position="296"/>
    </location>
    <ligand>
        <name>Mg(2+)</name>
        <dbReference type="ChEBI" id="CHEBI:18420"/>
        <label>1</label>
    </ligand>
</feature>
<feature type="binding site" evidence="1">
    <location>
        <position position="296"/>
    </location>
    <ligand>
        <name>Mg(2+)</name>
        <dbReference type="ChEBI" id="CHEBI:18420"/>
        <label>2</label>
    </ligand>
</feature>
<feature type="binding site" evidence="1">
    <location>
        <position position="296"/>
    </location>
    <ligand>
        <name>Mn(2+)</name>
        <dbReference type="ChEBI" id="CHEBI:29035"/>
        <label>1</label>
    </ligand>
</feature>
<feature type="binding site" evidence="1">
    <location>
        <position position="296"/>
    </location>
    <ligand>
        <name>Mn(2+)</name>
        <dbReference type="ChEBI" id="CHEBI:29035"/>
        <label>2</label>
    </ligand>
</feature>
<feature type="binding site" evidence="1">
    <location>
        <position position="298"/>
    </location>
    <ligand>
        <name>Mg(2+)</name>
        <dbReference type="ChEBI" id="CHEBI:18420"/>
        <label>2</label>
    </ligand>
</feature>
<feature type="binding site" evidence="1">
    <location>
        <position position="298"/>
    </location>
    <ligand>
        <name>Mn(2+)</name>
        <dbReference type="ChEBI" id="CHEBI:29035"/>
        <label>2</label>
    </ligand>
</feature>
<feature type="binding site" evidence="1">
    <location>
        <position position="709"/>
    </location>
    <ligand>
        <name>ATP</name>
        <dbReference type="ChEBI" id="CHEBI:30616"/>
        <label>2</label>
    </ligand>
</feature>
<feature type="binding site" evidence="1">
    <location>
        <position position="748"/>
    </location>
    <ligand>
        <name>ATP</name>
        <dbReference type="ChEBI" id="CHEBI:30616"/>
        <label>2</label>
    </ligand>
</feature>
<feature type="binding site" evidence="1">
    <location>
        <position position="750"/>
    </location>
    <ligand>
        <name>ATP</name>
        <dbReference type="ChEBI" id="CHEBI:30616"/>
        <label>2</label>
    </ligand>
</feature>
<feature type="binding site" evidence="1">
    <location>
        <position position="755"/>
    </location>
    <ligand>
        <name>ATP</name>
        <dbReference type="ChEBI" id="CHEBI:30616"/>
        <label>2</label>
    </ligand>
</feature>
<feature type="binding site" evidence="1">
    <location>
        <position position="779"/>
    </location>
    <ligand>
        <name>ATP</name>
        <dbReference type="ChEBI" id="CHEBI:30616"/>
        <label>2</label>
    </ligand>
</feature>
<feature type="binding site" evidence="1">
    <location>
        <position position="780"/>
    </location>
    <ligand>
        <name>ATP</name>
        <dbReference type="ChEBI" id="CHEBI:30616"/>
        <label>2</label>
    </ligand>
</feature>
<feature type="binding site" evidence="1">
    <location>
        <position position="781"/>
    </location>
    <ligand>
        <name>ATP</name>
        <dbReference type="ChEBI" id="CHEBI:30616"/>
        <label>2</label>
    </ligand>
</feature>
<feature type="binding site" evidence="1">
    <location>
        <position position="782"/>
    </location>
    <ligand>
        <name>ATP</name>
        <dbReference type="ChEBI" id="CHEBI:30616"/>
        <label>2</label>
    </ligand>
</feature>
<feature type="binding site" evidence="1">
    <location>
        <position position="822"/>
    </location>
    <ligand>
        <name>ATP</name>
        <dbReference type="ChEBI" id="CHEBI:30616"/>
        <label>2</label>
    </ligand>
</feature>
<feature type="binding site" evidence="1">
    <location>
        <position position="822"/>
    </location>
    <ligand>
        <name>Mg(2+)</name>
        <dbReference type="ChEBI" id="CHEBI:18420"/>
        <label>3</label>
    </ligand>
</feature>
<feature type="binding site" evidence="1">
    <location>
        <position position="822"/>
    </location>
    <ligand>
        <name>Mn(2+)</name>
        <dbReference type="ChEBI" id="CHEBI:29035"/>
        <label>3</label>
    </ligand>
</feature>
<feature type="binding site" evidence="1">
    <location>
        <position position="834"/>
    </location>
    <ligand>
        <name>ATP</name>
        <dbReference type="ChEBI" id="CHEBI:30616"/>
        <label>2</label>
    </ligand>
</feature>
<feature type="binding site" evidence="1">
    <location>
        <position position="834"/>
    </location>
    <ligand>
        <name>Mg(2+)</name>
        <dbReference type="ChEBI" id="CHEBI:18420"/>
        <label>3</label>
    </ligand>
</feature>
<feature type="binding site" evidence="1">
    <location>
        <position position="834"/>
    </location>
    <ligand>
        <name>Mg(2+)</name>
        <dbReference type="ChEBI" id="CHEBI:18420"/>
        <label>4</label>
    </ligand>
</feature>
<feature type="binding site" evidence="1">
    <location>
        <position position="834"/>
    </location>
    <ligand>
        <name>Mn(2+)</name>
        <dbReference type="ChEBI" id="CHEBI:29035"/>
        <label>3</label>
    </ligand>
</feature>
<feature type="binding site" evidence="1">
    <location>
        <position position="834"/>
    </location>
    <ligand>
        <name>Mn(2+)</name>
        <dbReference type="ChEBI" id="CHEBI:29035"/>
        <label>4</label>
    </ligand>
</feature>
<feature type="binding site" evidence="1">
    <location>
        <position position="836"/>
    </location>
    <ligand>
        <name>Mg(2+)</name>
        <dbReference type="ChEBI" id="CHEBI:18420"/>
        <label>4</label>
    </ligand>
</feature>
<feature type="binding site" evidence="1">
    <location>
        <position position="836"/>
    </location>
    <ligand>
        <name>Mn(2+)</name>
        <dbReference type="ChEBI" id="CHEBI:29035"/>
        <label>4</label>
    </ligand>
</feature>
<sequence length="1051" mass="117878">MKETPKKVLVIGSGPIKIAEAAEFDYSGSQALKALKEEGIETVLVNSNVATVQTSKKFADKLYMLPVVWWAVEKVIEKERPDGIMIGFGGQTALNVGVDLHKKGVLQKYGVKVLGTQIDGIEKALSREKFRETMIENNLPVPPSLSARSEEEAIKNAKIVGYPVMVRVSFNLGGRGSMVAWTEEDLKKNIRRALSQSYIGEVLIEKYLYHWIELEYEVMRDKKGNSAVIACIENLDPMGVHTGESTVVAPCQTLDNLEYQNMRTYTIEVARSINLIGECNVQFALNPRGYEYYIIETNPRMSRSSALASKATGYPLAYVSAKLALGYELHEVINKVSGRTCACFEPSLDYIVTKIPRWDLSKFENVDQSLATEMMSVGEVMSIGRSFEESLQKAVRMLDIGEPGVVGGKIYEAKMSKVEALKYLKERRPYWFLYVAKAFKEGATIDEVYEVTGISKFFLNKIKGLVDFYETLKILKEIDEETLKLAKKLGFSDEQISKALNKSTEYVRKIRDQSNIIPVVKLIDTLAGEWPSVTNYMYLTYNGTEDDLEFSQGNKLLIVGAGGFRIGVSVEFDWSVVSLMEAASKYFDEVAVLNYNPETVSTDWDIARKLYFDEINVERVLDLIKKEKFRYVATFSGGQIGNSIAKELEENGVRLLGTSGSSVDIAENREKFSKLLDKLGISQPNWVSATSLEEIKKFVNEVGFPVLVRPSYVLSGSSMKIAYSEEELYEYVRRATEISPKYPVVISKYIENAIEAEVDGVSDGNRVLGITLEHVEEAGVHSGDATMSIPFRKLSENSVNKMRENVLSLARELNIKGPFNVQFVVKDNTPHIIELNLRASRSMPFSSKAKGINLINESMKAIFNGLDFSEDYYEPPSKYWAVKSPQFSWSQLRGTYPFLGPEMKSTGEAASFGVTFYDALLKSWLSSIPNRIPNKNGIALVYGDKNLDYLKDTAVNLVKFGLTVYSISELPLQGIETIDKTKAEELVRAKKVEIVVTDGYLKKFDYNIRRTAVDYNIPVILNGRLGYEVSKAFLDYDSLTFFEISEYGGGI</sequence>
<keyword id="KW-0028">Amino-acid biosynthesis</keyword>
<keyword id="KW-0055">Arginine biosynthesis</keyword>
<keyword id="KW-0067">ATP-binding</keyword>
<keyword id="KW-0436">Ligase</keyword>
<keyword id="KW-0460">Magnesium</keyword>
<keyword id="KW-0464">Manganese</keyword>
<keyword id="KW-0479">Metal-binding</keyword>
<keyword id="KW-0547">Nucleotide-binding</keyword>
<keyword id="KW-0665">Pyrimidine biosynthesis</keyword>
<keyword id="KW-0677">Repeat</keyword>
<gene>
    <name evidence="1" type="primary">carB</name>
    <name type="ordered locus">M1627_1608</name>
</gene>
<protein>
    <recommendedName>
        <fullName evidence="1">Carbamoyl phosphate synthase large chain</fullName>
        <ecNumber evidence="1">6.3.4.16</ecNumber>
        <ecNumber evidence="1">6.3.5.5</ecNumber>
    </recommendedName>
    <alternativeName>
        <fullName evidence="1">Carbamoyl phosphate synthetase ammonia chain</fullName>
    </alternativeName>
</protein>
<reference key="1">
    <citation type="journal article" date="2009" name="Proc. Natl. Acad. Sci. U.S.A.">
        <title>Biogeography of the Sulfolobus islandicus pan-genome.</title>
        <authorList>
            <person name="Reno M.L."/>
            <person name="Held N.L."/>
            <person name="Fields C.J."/>
            <person name="Burke P.V."/>
            <person name="Whitaker R.J."/>
        </authorList>
    </citation>
    <scope>NUCLEOTIDE SEQUENCE [LARGE SCALE GENOMIC DNA]</scope>
    <source>
        <strain>M.16.27</strain>
    </source>
</reference>
<comment type="function">
    <text evidence="1">Large subunit of the glutamine-dependent carbamoyl phosphate synthetase (CPSase). CPSase catalyzes the formation of carbamoyl phosphate from the ammonia moiety of glutamine, carbonate, and phosphate donated by ATP, constituting the first step of 2 biosynthetic pathways, one leading to arginine and/or urea and the other to pyrimidine nucleotides. The large subunit (synthetase) binds the substrates ammonia (free or transferred from glutamine from the small subunit), hydrogencarbonate and ATP and carries out an ATP-coupled ligase reaction, activating hydrogencarbonate by forming carboxy phosphate which reacts with ammonia to form carbamoyl phosphate.</text>
</comment>
<comment type="catalytic activity">
    <reaction evidence="1">
        <text>hydrogencarbonate + L-glutamine + 2 ATP + H2O = carbamoyl phosphate + L-glutamate + 2 ADP + phosphate + 2 H(+)</text>
        <dbReference type="Rhea" id="RHEA:18633"/>
        <dbReference type="ChEBI" id="CHEBI:15377"/>
        <dbReference type="ChEBI" id="CHEBI:15378"/>
        <dbReference type="ChEBI" id="CHEBI:17544"/>
        <dbReference type="ChEBI" id="CHEBI:29985"/>
        <dbReference type="ChEBI" id="CHEBI:30616"/>
        <dbReference type="ChEBI" id="CHEBI:43474"/>
        <dbReference type="ChEBI" id="CHEBI:58228"/>
        <dbReference type="ChEBI" id="CHEBI:58359"/>
        <dbReference type="ChEBI" id="CHEBI:456216"/>
        <dbReference type="EC" id="6.3.5.5"/>
    </reaction>
</comment>
<comment type="catalytic activity">
    <molecule>Carbamoyl phosphate synthase large chain</molecule>
    <reaction evidence="1">
        <text>hydrogencarbonate + NH4(+) + 2 ATP = carbamoyl phosphate + 2 ADP + phosphate + 2 H(+)</text>
        <dbReference type="Rhea" id="RHEA:18029"/>
        <dbReference type="ChEBI" id="CHEBI:15378"/>
        <dbReference type="ChEBI" id="CHEBI:17544"/>
        <dbReference type="ChEBI" id="CHEBI:28938"/>
        <dbReference type="ChEBI" id="CHEBI:30616"/>
        <dbReference type="ChEBI" id="CHEBI:43474"/>
        <dbReference type="ChEBI" id="CHEBI:58228"/>
        <dbReference type="ChEBI" id="CHEBI:456216"/>
        <dbReference type="EC" id="6.3.4.16"/>
    </reaction>
</comment>
<comment type="cofactor">
    <cofactor evidence="1">
        <name>Mg(2+)</name>
        <dbReference type="ChEBI" id="CHEBI:18420"/>
    </cofactor>
    <cofactor evidence="1">
        <name>Mn(2+)</name>
        <dbReference type="ChEBI" id="CHEBI:29035"/>
    </cofactor>
    <text evidence="1">Binds 4 Mg(2+) or Mn(2+) ions per subunit.</text>
</comment>
<comment type="pathway">
    <text evidence="1">Amino-acid biosynthesis; L-arginine biosynthesis; carbamoyl phosphate from bicarbonate: step 1/1.</text>
</comment>
<comment type="pathway">
    <text evidence="1">Pyrimidine metabolism; UMP biosynthesis via de novo pathway; (S)-dihydroorotate from bicarbonate: step 1/3.</text>
</comment>
<comment type="subunit">
    <text evidence="1">Composed of two chains; the small (or glutamine) chain promotes the hydrolysis of glutamine to ammonia, which is used by the large (or ammonia) chain to synthesize carbamoyl phosphate. Tetramer of heterodimers (alpha,beta)4.</text>
</comment>
<comment type="domain">
    <text evidence="1">The large subunit is composed of 2 ATP-grasp domains that are involved in binding the 2 ATP molecules needed for carbamoyl phosphate synthesis. The N-terminal ATP-grasp domain (referred to as the carboxyphosphate synthetic component) catalyzes the ATP-dependent phosphorylation of hydrogencarbonate to carboxyphosphate and the subsequent nucleophilic attack by ammonia to form a carbamate intermediate. The C-terminal ATP-grasp domain (referred to as the carbamoyl phosphate synthetic component) then catalyzes the phosphorylation of carbamate with the second ATP to form the end product carbamoyl phosphate. The reactive and unstable enzyme intermediates are sequentially channeled from one active site to the next through the interior of the protein over a distance of at least 96 A.</text>
</comment>
<comment type="similarity">
    <text evidence="1">Belongs to the CarB family.</text>
</comment>
<accession>C3N664</accession>